<reference key="1">
    <citation type="journal article" date="2011" name="Genome Biol.">
        <title>Comparative and functional genomics provide insights into the pathogenicity of dermatophytic fungi.</title>
        <authorList>
            <person name="Burmester A."/>
            <person name="Shelest E."/>
            <person name="Gloeckner G."/>
            <person name="Heddergott C."/>
            <person name="Schindler S."/>
            <person name="Staib P."/>
            <person name="Heidel A."/>
            <person name="Felder M."/>
            <person name="Petzold A."/>
            <person name="Szafranski K."/>
            <person name="Feuermann M."/>
            <person name="Pedruzzi I."/>
            <person name="Priebe S."/>
            <person name="Groth M."/>
            <person name="Winkler R."/>
            <person name="Li W."/>
            <person name="Kniemeyer O."/>
            <person name="Schroeckh V."/>
            <person name="Hertweck C."/>
            <person name="Hube B."/>
            <person name="White T.C."/>
            <person name="Platzer M."/>
            <person name="Guthke R."/>
            <person name="Heitman J."/>
            <person name="Woestemeyer J."/>
            <person name="Zipfel P.F."/>
            <person name="Monod M."/>
            <person name="Brakhage A.A."/>
        </authorList>
    </citation>
    <scope>NUCLEOTIDE SEQUENCE [LARGE SCALE GENOMIC DNA]</scope>
    <scope>IDENTIFICATION BY MASS SPECTROMETRY</scope>
    <scope>SUBCELLULAR LOCATION</scope>
    <scope>INDUCTION</scope>
    <source>
        <strain>ATCC MYA-4681 / CBS 112371</strain>
    </source>
</reference>
<reference key="2">
    <citation type="journal article" date="2011" name="Proteomics">
        <title>Identification of novel secreted proteases during extracellular proteolysis by dermatophytes at acidic pH.</title>
        <authorList>
            <person name="Sriranganadane D."/>
            <person name="Waridel P."/>
            <person name="Salamin K."/>
            <person name="Feuermann M."/>
            <person name="Mignon B."/>
            <person name="Staib P."/>
            <person name="Neuhaus J.M."/>
            <person name="Quadroni M."/>
            <person name="Monod M."/>
        </authorList>
    </citation>
    <scope>SUBCELLULAR LOCATION</scope>
    <scope>IDENTIFICATION BY MASS SPECTROMETRY</scope>
</reference>
<dbReference type="EMBL" id="ABSU01000002">
    <property type="protein sequence ID" value="EFE36365.1"/>
    <property type="molecule type" value="Genomic_DNA"/>
</dbReference>
<dbReference type="RefSeq" id="XP_003017010.1">
    <property type="nucleotide sequence ID" value="XM_003016964.1"/>
</dbReference>
<dbReference type="SMR" id="D4ALV6"/>
<dbReference type="GeneID" id="9526731"/>
<dbReference type="KEGG" id="abe:ARB_05304"/>
<dbReference type="eggNOG" id="ENOG502SQTH">
    <property type="taxonomic scope" value="Eukaryota"/>
</dbReference>
<dbReference type="HOGENOM" id="CLU_1337214_0_0_1"/>
<dbReference type="Proteomes" id="UP000008866">
    <property type="component" value="Unassembled WGS sequence"/>
</dbReference>
<dbReference type="GO" id="GO:0005576">
    <property type="term" value="C:extracellular region"/>
    <property type="evidence" value="ECO:0007669"/>
    <property type="project" value="UniProtKB-SubCell"/>
</dbReference>
<dbReference type="CDD" id="cd22778">
    <property type="entry name" value="DPBB_CEPL-like"/>
    <property type="match status" value="1"/>
</dbReference>
<dbReference type="Gene3D" id="2.40.40.10">
    <property type="entry name" value="RlpA-like domain"/>
    <property type="match status" value="1"/>
</dbReference>
<dbReference type="InterPro" id="IPR010829">
    <property type="entry name" value="Cerato-platanin"/>
</dbReference>
<dbReference type="InterPro" id="IPR036908">
    <property type="entry name" value="RlpA-like_sf"/>
</dbReference>
<dbReference type="Pfam" id="PF07249">
    <property type="entry name" value="Cerato-platanin"/>
    <property type="match status" value="1"/>
</dbReference>
<dbReference type="SUPFAM" id="SSF50685">
    <property type="entry name" value="Barwin-like endoglucanases"/>
    <property type="match status" value="1"/>
</dbReference>
<gene>
    <name type="ORF">ARB_05304</name>
</gene>
<feature type="chain" id="PRO_0000434431" description="Allergen Asp f 15 homolog">
    <location>
        <begin position="1"/>
        <end position="205"/>
    </location>
</feature>
<comment type="subcellular location">
    <subcellularLocation>
        <location evidence="1 2">Secreted</location>
    </subcellularLocation>
</comment>
<comment type="induction">
    <text evidence="1">Expression is up-regulated in presence of human keratinocytes.</text>
</comment>
<comment type="allergen">
    <text evidence="3">May cause an allergic reaction in human.</text>
</comment>
<comment type="similarity">
    <text evidence="3">Belongs to the cerato-platanin family.</text>
</comment>
<protein>
    <recommendedName>
        <fullName evidence="3">Allergen Asp f 15 homolog</fullName>
    </recommendedName>
</protein>
<name>AL15_ARTBC</name>
<keyword id="KW-0020">Allergen</keyword>
<keyword id="KW-1185">Reference proteome</keyword>
<keyword id="KW-0964">Secreted</keyword>
<proteinExistence type="evidence at protein level"/>
<evidence type="ECO:0000269" key="1">
    <source>
    </source>
</evidence>
<evidence type="ECO:0000269" key="2">
    <source>
    </source>
</evidence>
<evidence type="ECO:0000305" key="3"/>
<organism>
    <name type="scientific">Arthroderma benhamiae (strain ATCC MYA-4681 / CBS 112371)</name>
    <name type="common">Trichophyton mentagrophytes</name>
    <dbReference type="NCBI Taxonomy" id="663331"/>
    <lineage>
        <taxon>Eukaryota</taxon>
        <taxon>Fungi</taxon>
        <taxon>Dikarya</taxon>
        <taxon>Ascomycota</taxon>
        <taxon>Pezizomycotina</taxon>
        <taxon>Eurotiomycetes</taxon>
        <taxon>Eurotiomycetidae</taxon>
        <taxon>Onygenales</taxon>
        <taxon>Arthrodermataceae</taxon>
        <taxon>Trichophyton</taxon>
    </lineage>
</organism>
<sequence length="205" mass="21481">MKAFAGSFQPWIPQCRSPCICEVAASKDNGVLERPCSTLSVIVNIAVKKSYINPSPPAKMKFTIPATLGLMVSLSSAAAISGTVSLSYDPKYDNAGLSLTQVTCSDGTNGLITKGFTTAGSLPNFPNIGGSFAVEGYNSANCGKCFKVTWPVLNKSIFVTSIDKADGFNVAKAAMDTLTNNQAGQLGRIDVTFEDALPTDCGFKA</sequence>
<accession>D4ALV6</accession>